<protein>
    <recommendedName>
        <fullName evidence="2">Translation initiation factor IF-2</fullName>
    </recommendedName>
</protein>
<comment type="function">
    <text evidence="2">One of the essential components for the initiation of protein synthesis. Protects formylmethionyl-tRNA from spontaneous hydrolysis and promotes its binding to the 30S ribosomal subunits. Also involved in the hydrolysis of GTP during the formation of the 70S ribosomal complex.</text>
</comment>
<comment type="subcellular location">
    <subcellularLocation>
        <location evidence="2">Cytoplasm</location>
    </subcellularLocation>
</comment>
<comment type="similarity">
    <text evidence="2">Belongs to the TRAFAC class translation factor GTPase superfamily. Classic translation factor GTPase family. IF-2 subfamily.</text>
</comment>
<keyword id="KW-0963">Cytoplasm</keyword>
<keyword id="KW-0342">GTP-binding</keyword>
<keyword id="KW-0396">Initiation factor</keyword>
<keyword id="KW-0547">Nucleotide-binding</keyword>
<keyword id="KW-0648">Protein biosynthesis</keyword>
<keyword id="KW-1185">Reference proteome</keyword>
<reference key="1">
    <citation type="submission" date="2007-10" db="EMBL/GenBank/DDBJ databases">
        <title>Complete sequence of Desulfococcus oleovorans Hxd3.</title>
        <authorList>
            <consortium name="US DOE Joint Genome Institute"/>
            <person name="Copeland A."/>
            <person name="Lucas S."/>
            <person name="Lapidus A."/>
            <person name="Barry K."/>
            <person name="Glavina del Rio T."/>
            <person name="Dalin E."/>
            <person name="Tice H."/>
            <person name="Pitluck S."/>
            <person name="Kiss H."/>
            <person name="Brettin T."/>
            <person name="Bruce D."/>
            <person name="Detter J.C."/>
            <person name="Han C."/>
            <person name="Schmutz J."/>
            <person name="Larimer F."/>
            <person name="Land M."/>
            <person name="Hauser L."/>
            <person name="Kyrpides N."/>
            <person name="Kim E."/>
            <person name="Wawrik B."/>
            <person name="Richardson P."/>
        </authorList>
    </citation>
    <scope>NUCLEOTIDE SEQUENCE [LARGE SCALE GENOMIC DNA]</scope>
    <source>
        <strain>DSM 6200 / JCM 39069 / Hxd3</strain>
    </source>
</reference>
<organism>
    <name type="scientific">Desulfosudis oleivorans (strain DSM 6200 / JCM 39069 / Hxd3)</name>
    <name type="common">Desulfococcus oleovorans</name>
    <dbReference type="NCBI Taxonomy" id="96561"/>
    <lineage>
        <taxon>Bacteria</taxon>
        <taxon>Pseudomonadati</taxon>
        <taxon>Thermodesulfobacteriota</taxon>
        <taxon>Desulfobacteria</taxon>
        <taxon>Desulfobacterales</taxon>
        <taxon>Desulfosudaceae</taxon>
        <taxon>Desulfosudis</taxon>
    </lineage>
</organism>
<feature type="chain" id="PRO_1000093781" description="Translation initiation factor IF-2">
    <location>
        <begin position="1"/>
        <end position="884"/>
    </location>
</feature>
<feature type="domain" description="tr-type G">
    <location>
        <begin position="384"/>
        <end position="553"/>
    </location>
</feature>
<feature type="region of interest" description="Disordered" evidence="3">
    <location>
        <begin position="58"/>
        <end position="248"/>
    </location>
</feature>
<feature type="region of interest" description="G1" evidence="1">
    <location>
        <begin position="393"/>
        <end position="400"/>
    </location>
</feature>
<feature type="region of interest" description="G2" evidence="1">
    <location>
        <begin position="418"/>
        <end position="422"/>
    </location>
</feature>
<feature type="region of interest" description="G3" evidence="1">
    <location>
        <begin position="439"/>
        <end position="442"/>
    </location>
</feature>
<feature type="region of interest" description="G4" evidence="1">
    <location>
        <begin position="493"/>
        <end position="496"/>
    </location>
</feature>
<feature type="region of interest" description="G5" evidence="1">
    <location>
        <begin position="529"/>
        <end position="531"/>
    </location>
</feature>
<feature type="compositionally biased region" description="Basic residues" evidence="3">
    <location>
        <begin position="66"/>
        <end position="77"/>
    </location>
</feature>
<feature type="compositionally biased region" description="Low complexity" evidence="3">
    <location>
        <begin position="87"/>
        <end position="106"/>
    </location>
</feature>
<feature type="compositionally biased region" description="Basic residues" evidence="3">
    <location>
        <begin position="172"/>
        <end position="183"/>
    </location>
</feature>
<feature type="compositionally biased region" description="Low complexity" evidence="3">
    <location>
        <begin position="207"/>
        <end position="223"/>
    </location>
</feature>
<feature type="compositionally biased region" description="Basic residues" evidence="3">
    <location>
        <begin position="229"/>
        <end position="239"/>
    </location>
</feature>
<feature type="binding site" evidence="2">
    <location>
        <begin position="393"/>
        <end position="400"/>
    </location>
    <ligand>
        <name>GTP</name>
        <dbReference type="ChEBI" id="CHEBI:37565"/>
    </ligand>
</feature>
<feature type="binding site" evidence="2">
    <location>
        <begin position="439"/>
        <end position="443"/>
    </location>
    <ligand>
        <name>GTP</name>
        <dbReference type="ChEBI" id="CHEBI:37565"/>
    </ligand>
</feature>
<feature type="binding site" evidence="2">
    <location>
        <begin position="493"/>
        <end position="496"/>
    </location>
    <ligand>
        <name>GTP</name>
        <dbReference type="ChEBI" id="CHEBI:37565"/>
    </ligand>
</feature>
<proteinExistence type="inferred from homology"/>
<name>IF2_DESOH</name>
<sequence>MAKIRIFELARSLNMTNPDLLDRLKEMGIEAKSHLSSLEDDIVEKVRQGVFRTEVEKPEKVEQKRVRSNVIRKRRQPVKSEAEPEAEAPAAQAPEAEEVTAPTAEEAVPEEAADADVSAKAETPTAPETPEEAEISVSEEAPVEEAADQVPPTDEAVDPAEAAPAEEESSPSRKKAKAKKHQAAKIIKFPDAPQRLSNKGVLEVVDDTAPADSPAAPAAATPAGEKDKKPSRKDRKKRGKTESVETEEAVPVKKKGVFKRKEIVEGVALYDRTRGRMRKKGKGGAKVPGGAKTQITTPKAIKRKVRINESISVAELAKRMGVKASEVIARLMGMGVMATLNQQVDFDSAALVAAEFEYEVEKASATEEELLELNVEEDQGNLKKRAPVVTIMGHVDHGKTSLLDVIRQSRITEGEAGGITQHIGAYKVNTANGEVVFLDTPGHEAFTAMRARGARATDIVILVVAADDGIMPQTIEAINHSRAAGVPIVVAVNKIDKEGADPDRVKREASDHGLVPEDWGGDTMFVNVSAKQKLGISDLLDMVLLQAEMLELKANPDKKARGVVIEAKLDPGRGPVATVLIHEGTLSVGETVVCGIHYGKIRAMFDDKGAPLDQAGPATPVELIGLGGVATSGDDLFAVGDEKSAKTVSENRQQKQRTEDLARKDSISLENFFEKMQEKEEKVLNIIIKADVNGSCEAIADSLQKFSSGEVKIHVVHSAPGTIIESDVTLASASNAIVLGFNVRPSPKVRALAAEENVDIRSYDIIYDLIDDIKKALTGMMSSTFEEEVLGRAEVRELFVIPKKGTIAGSYVLDGKIERGRPARLLRDGVIAYNGVIGSLRRHKDDAKEVASGYECGIGIENYNDIKPGDVIECYFLREIKPEL</sequence>
<gene>
    <name evidence="2" type="primary">infB</name>
    <name type="ordered locus">Dole_3035</name>
</gene>
<evidence type="ECO:0000250" key="1"/>
<evidence type="ECO:0000255" key="2">
    <source>
        <dbReference type="HAMAP-Rule" id="MF_00100"/>
    </source>
</evidence>
<evidence type="ECO:0000256" key="3">
    <source>
        <dbReference type="SAM" id="MobiDB-lite"/>
    </source>
</evidence>
<accession>A8ZZ65</accession>
<dbReference type="EMBL" id="CP000859">
    <property type="protein sequence ID" value="ABW68838.1"/>
    <property type="molecule type" value="Genomic_DNA"/>
</dbReference>
<dbReference type="RefSeq" id="WP_012176449.1">
    <property type="nucleotide sequence ID" value="NC_009943.1"/>
</dbReference>
<dbReference type="SMR" id="A8ZZ65"/>
<dbReference type="STRING" id="96561.Dole_3035"/>
<dbReference type="KEGG" id="dol:Dole_3035"/>
<dbReference type="eggNOG" id="COG0532">
    <property type="taxonomic scope" value="Bacteria"/>
</dbReference>
<dbReference type="HOGENOM" id="CLU_006301_5_1_7"/>
<dbReference type="OrthoDB" id="9811804at2"/>
<dbReference type="Proteomes" id="UP000008561">
    <property type="component" value="Chromosome"/>
</dbReference>
<dbReference type="GO" id="GO:0005829">
    <property type="term" value="C:cytosol"/>
    <property type="evidence" value="ECO:0007669"/>
    <property type="project" value="TreeGrafter"/>
</dbReference>
<dbReference type="GO" id="GO:0005525">
    <property type="term" value="F:GTP binding"/>
    <property type="evidence" value="ECO:0007669"/>
    <property type="project" value="UniProtKB-KW"/>
</dbReference>
<dbReference type="GO" id="GO:0003924">
    <property type="term" value="F:GTPase activity"/>
    <property type="evidence" value="ECO:0007669"/>
    <property type="project" value="UniProtKB-UniRule"/>
</dbReference>
<dbReference type="GO" id="GO:0003743">
    <property type="term" value="F:translation initiation factor activity"/>
    <property type="evidence" value="ECO:0007669"/>
    <property type="project" value="UniProtKB-UniRule"/>
</dbReference>
<dbReference type="CDD" id="cd01887">
    <property type="entry name" value="IF2_eIF5B"/>
    <property type="match status" value="1"/>
</dbReference>
<dbReference type="CDD" id="cd03702">
    <property type="entry name" value="IF2_mtIF2_II"/>
    <property type="match status" value="1"/>
</dbReference>
<dbReference type="CDD" id="cd03692">
    <property type="entry name" value="mtIF2_IVc"/>
    <property type="match status" value="1"/>
</dbReference>
<dbReference type="FunFam" id="2.40.30.10:FF:000007">
    <property type="entry name" value="Translation initiation factor IF-2"/>
    <property type="match status" value="1"/>
</dbReference>
<dbReference type="FunFam" id="2.40.30.10:FF:000008">
    <property type="entry name" value="Translation initiation factor IF-2"/>
    <property type="match status" value="1"/>
</dbReference>
<dbReference type="FunFam" id="3.40.50.10050:FF:000001">
    <property type="entry name" value="Translation initiation factor IF-2"/>
    <property type="match status" value="1"/>
</dbReference>
<dbReference type="FunFam" id="3.40.50.300:FF:000019">
    <property type="entry name" value="Translation initiation factor IF-2"/>
    <property type="match status" value="1"/>
</dbReference>
<dbReference type="Gene3D" id="1.10.10.2480">
    <property type="match status" value="1"/>
</dbReference>
<dbReference type="Gene3D" id="3.40.50.300">
    <property type="entry name" value="P-loop containing nucleotide triphosphate hydrolases"/>
    <property type="match status" value="1"/>
</dbReference>
<dbReference type="Gene3D" id="2.40.30.10">
    <property type="entry name" value="Translation factors"/>
    <property type="match status" value="2"/>
</dbReference>
<dbReference type="Gene3D" id="3.40.50.10050">
    <property type="entry name" value="Translation initiation factor IF- 2, domain 3"/>
    <property type="match status" value="1"/>
</dbReference>
<dbReference type="HAMAP" id="MF_00100_B">
    <property type="entry name" value="IF_2_B"/>
    <property type="match status" value="1"/>
</dbReference>
<dbReference type="InterPro" id="IPR053905">
    <property type="entry name" value="EF-G-like_DII"/>
</dbReference>
<dbReference type="InterPro" id="IPR044145">
    <property type="entry name" value="IF2_II"/>
</dbReference>
<dbReference type="InterPro" id="IPR006847">
    <property type="entry name" value="IF2_N"/>
</dbReference>
<dbReference type="InterPro" id="IPR027417">
    <property type="entry name" value="P-loop_NTPase"/>
</dbReference>
<dbReference type="InterPro" id="IPR005225">
    <property type="entry name" value="Small_GTP-bd"/>
</dbReference>
<dbReference type="InterPro" id="IPR000795">
    <property type="entry name" value="T_Tr_GTP-bd_dom"/>
</dbReference>
<dbReference type="InterPro" id="IPR000178">
    <property type="entry name" value="TF_IF2_bacterial-like"/>
</dbReference>
<dbReference type="InterPro" id="IPR015760">
    <property type="entry name" value="TIF_IF2"/>
</dbReference>
<dbReference type="InterPro" id="IPR023115">
    <property type="entry name" value="TIF_IF2_dom3"/>
</dbReference>
<dbReference type="InterPro" id="IPR036925">
    <property type="entry name" value="TIF_IF2_dom3_sf"/>
</dbReference>
<dbReference type="InterPro" id="IPR009000">
    <property type="entry name" value="Transl_B-barrel_sf"/>
</dbReference>
<dbReference type="NCBIfam" id="TIGR00487">
    <property type="entry name" value="IF-2"/>
    <property type="match status" value="1"/>
</dbReference>
<dbReference type="NCBIfam" id="TIGR00231">
    <property type="entry name" value="small_GTP"/>
    <property type="match status" value="1"/>
</dbReference>
<dbReference type="PANTHER" id="PTHR43381:SF5">
    <property type="entry name" value="TR-TYPE G DOMAIN-CONTAINING PROTEIN"/>
    <property type="match status" value="1"/>
</dbReference>
<dbReference type="PANTHER" id="PTHR43381">
    <property type="entry name" value="TRANSLATION INITIATION FACTOR IF-2-RELATED"/>
    <property type="match status" value="1"/>
</dbReference>
<dbReference type="Pfam" id="PF22042">
    <property type="entry name" value="EF-G_D2"/>
    <property type="match status" value="1"/>
</dbReference>
<dbReference type="Pfam" id="PF00009">
    <property type="entry name" value="GTP_EFTU"/>
    <property type="match status" value="1"/>
</dbReference>
<dbReference type="Pfam" id="PF11987">
    <property type="entry name" value="IF-2"/>
    <property type="match status" value="1"/>
</dbReference>
<dbReference type="Pfam" id="PF04760">
    <property type="entry name" value="IF2_N"/>
    <property type="match status" value="2"/>
</dbReference>
<dbReference type="SUPFAM" id="SSF52156">
    <property type="entry name" value="Initiation factor IF2/eIF5b, domain 3"/>
    <property type="match status" value="1"/>
</dbReference>
<dbReference type="SUPFAM" id="SSF52540">
    <property type="entry name" value="P-loop containing nucleoside triphosphate hydrolases"/>
    <property type="match status" value="1"/>
</dbReference>
<dbReference type="SUPFAM" id="SSF50447">
    <property type="entry name" value="Translation proteins"/>
    <property type="match status" value="2"/>
</dbReference>
<dbReference type="PROSITE" id="PS51722">
    <property type="entry name" value="G_TR_2"/>
    <property type="match status" value="1"/>
</dbReference>
<dbReference type="PROSITE" id="PS01176">
    <property type="entry name" value="IF2"/>
    <property type="match status" value="1"/>
</dbReference>